<dbReference type="EMBL" id="AF215071">
    <property type="protein sequence ID" value="AAG60499.1"/>
    <property type="molecule type" value="mRNA"/>
</dbReference>
<dbReference type="ConoServer" id="758">
    <property type="toxin name" value="Ar6.24 precursor"/>
</dbReference>
<dbReference type="GO" id="GO:0005576">
    <property type="term" value="C:extracellular region"/>
    <property type="evidence" value="ECO:0007669"/>
    <property type="project" value="UniProtKB-SubCell"/>
</dbReference>
<dbReference type="GO" id="GO:0008200">
    <property type="term" value="F:ion channel inhibitor activity"/>
    <property type="evidence" value="ECO:0007669"/>
    <property type="project" value="InterPro"/>
</dbReference>
<dbReference type="GO" id="GO:0090729">
    <property type="term" value="F:toxin activity"/>
    <property type="evidence" value="ECO:0007669"/>
    <property type="project" value="UniProtKB-KW"/>
</dbReference>
<dbReference type="InterPro" id="IPR004214">
    <property type="entry name" value="Conotoxin"/>
</dbReference>
<dbReference type="Pfam" id="PF02950">
    <property type="entry name" value="Conotoxin"/>
    <property type="match status" value="1"/>
</dbReference>
<evidence type="ECO:0000250" key="1"/>
<evidence type="ECO:0000255" key="2"/>
<evidence type="ECO:0000305" key="3"/>
<sequence>MSRLGIMVLTLLLLVFIVTSHQDAGEKQATQRAAINFRWKRSLTRRTATEECEEYCEDEEKTCCGEEDGEPVCARFCLG</sequence>
<keyword id="KW-0027">Amidation</keyword>
<keyword id="KW-0165">Cleavage on pair of basic residues</keyword>
<keyword id="KW-1015">Disulfide bond</keyword>
<keyword id="KW-0960">Knottin</keyword>
<keyword id="KW-0528">Neurotoxin</keyword>
<keyword id="KW-0964">Secreted</keyword>
<keyword id="KW-0732">Signal</keyword>
<keyword id="KW-0800">Toxin</keyword>
<feature type="signal peptide" evidence="2">
    <location>
        <begin position="1"/>
        <end position="20"/>
    </location>
</feature>
<feature type="propeptide" id="PRO_0000404852" evidence="1">
    <location>
        <begin position="21"/>
        <end position="44"/>
    </location>
</feature>
<feature type="peptide" id="PRO_0000404853" description="Conotoxin ArMSGL-0122">
    <location>
        <begin position="47"/>
        <end position="78"/>
    </location>
</feature>
<feature type="modified residue" description="Leucine amide" evidence="1">
    <location>
        <position position="78"/>
    </location>
</feature>
<feature type="disulfide bond" evidence="1">
    <location>
        <begin position="52"/>
        <end position="64"/>
    </location>
</feature>
<feature type="disulfide bond" evidence="1">
    <location>
        <begin position="56"/>
        <end position="73"/>
    </location>
</feature>
<feature type="disulfide bond" evidence="1">
    <location>
        <begin position="63"/>
        <end position="77"/>
    </location>
</feature>
<organism>
    <name type="scientific">Conus arenatus</name>
    <name type="common">Sand-dusted cone</name>
    <dbReference type="NCBI Taxonomy" id="89451"/>
    <lineage>
        <taxon>Eukaryota</taxon>
        <taxon>Metazoa</taxon>
        <taxon>Spiralia</taxon>
        <taxon>Lophotrochozoa</taxon>
        <taxon>Mollusca</taxon>
        <taxon>Gastropoda</taxon>
        <taxon>Caenogastropoda</taxon>
        <taxon>Neogastropoda</taxon>
        <taxon>Conoidea</taxon>
        <taxon>Conidae</taxon>
        <taxon>Conus</taxon>
    </lineage>
</organism>
<comment type="subcellular location">
    <subcellularLocation>
        <location evidence="1">Secreted</location>
    </subcellularLocation>
</comment>
<comment type="tissue specificity">
    <text>Expressed by the venom duct.</text>
</comment>
<comment type="domain">
    <text evidence="1">The presence of a 'disulfide through disulfide knot' structurally defines this protein as a knottin.</text>
</comment>
<comment type="domain">
    <text>The cysteine framework is VI/VII (C-C-CC-C-C).</text>
</comment>
<comment type="similarity">
    <text evidence="3">Belongs to the conotoxin O3 superfamily.</text>
</comment>
<protein>
    <recommendedName>
        <fullName>Conotoxin ArMSGL-0122</fullName>
    </recommendedName>
</protein>
<reference key="1">
    <citation type="journal article" date="2001" name="Mol. Biol. Evol.">
        <title>Mechanisms for evolving hypervariability: the case of conopeptides.</title>
        <authorList>
            <person name="Conticello S.G."/>
            <person name="Gilad Y."/>
            <person name="Avidan N."/>
            <person name="Ben-Asher E."/>
            <person name="Levy Z."/>
            <person name="Fainzilber M."/>
        </authorList>
    </citation>
    <scope>NUCLEOTIDE SEQUENCE [MRNA]</scope>
    <source>
        <tissue>Venom duct</tissue>
    </source>
</reference>
<name>O3624_CONAE</name>
<proteinExistence type="evidence at transcript level"/>
<accession>Q9BP67</accession>